<proteinExistence type="evidence at protein level"/>
<name>ML12B_RAT</name>
<feature type="chain" id="PRO_0000198740" description="Myosin regulatory light chain 12B">
    <location>
        <begin position="1"/>
        <end position="172"/>
    </location>
</feature>
<feature type="domain" description="EF-hand 1" evidence="3">
    <location>
        <begin position="29"/>
        <end position="64"/>
    </location>
</feature>
<feature type="domain" description="EF-hand 2" evidence="3">
    <location>
        <begin position="98"/>
        <end position="133"/>
    </location>
</feature>
<feature type="domain" description="EF-hand 3" evidence="3">
    <location>
        <begin position="134"/>
        <end position="169"/>
    </location>
</feature>
<feature type="region of interest" description="Disordered" evidence="4">
    <location>
        <begin position="1"/>
        <end position="20"/>
    </location>
</feature>
<feature type="compositionally biased region" description="Basic residues" evidence="4">
    <location>
        <begin position="1"/>
        <end position="16"/>
    </location>
</feature>
<feature type="binding site" evidence="3">
    <location>
        <position position="42"/>
    </location>
    <ligand>
        <name>Ca(2+)</name>
        <dbReference type="ChEBI" id="CHEBI:29108"/>
    </ligand>
</feature>
<feature type="binding site" evidence="3">
    <location>
        <position position="44"/>
    </location>
    <ligand>
        <name>Ca(2+)</name>
        <dbReference type="ChEBI" id="CHEBI:29108"/>
    </ligand>
</feature>
<feature type="binding site" evidence="3">
    <location>
        <position position="46"/>
    </location>
    <ligand>
        <name>Ca(2+)</name>
        <dbReference type="ChEBI" id="CHEBI:29108"/>
    </ligand>
</feature>
<feature type="binding site" evidence="3">
    <location>
        <position position="53"/>
    </location>
    <ligand>
        <name>Ca(2+)</name>
        <dbReference type="ChEBI" id="CHEBI:29108"/>
    </ligand>
</feature>
<feature type="modified residue" description="Phosphothreonine; by MLCK and ZIPK/DAPK3" evidence="5">
    <location>
        <position position="19"/>
    </location>
</feature>
<feature type="modified residue" description="Phosphoserine; by MLCK and ZIPK/DAPK3" evidence="5">
    <location>
        <position position="20"/>
    </location>
</feature>
<feature type="sequence conflict" description="In Ref. 3; AAH60577." evidence="7" ref="3">
    <original>R</original>
    <variation>P</variation>
    <location>
        <position position="80"/>
    </location>
</feature>
<gene>
    <name type="primary">Myl12b</name>
    <name type="synonym">Mrlc2</name>
    <name type="synonym">Mrlcb</name>
    <name type="synonym">Mylc2b</name>
</gene>
<sequence length="172" mass="19838">MSSKKAKTKTTKKRPQRATSNVFAMFDQSQIQEFKEAFNMIDQNRDGFIDKEDLHDMLASLGKNPTDAYLDAMMNEAPGRINFTMFLTMFGEKLNGTDPEDVIRNAFACFDEEATGTIQEDYLRELLTTMGDRFTDEEVDELYREAPIDKKGNFNYIEFTRILKHGAKDKDD</sequence>
<keyword id="KW-0106">Calcium</keyword>
<keyword id="KW-0479">Metal-binding</keyword>
<keyword id="KW-0505">Motor protein</keyword>
<keyword id="KW-0514">Muscle protein</keyword>
<keyword id="KW-0518">Myosin</keyword>
<keyword id="KW-0597">Phosphoprotein</keyword>
<keyword id="KW-1185">Reference proteome</keyword>
<keyword id="KW-0677">Repeat</keyword>
<reference key="1">
    <citation type="journal article" date="1990" name="J. Cell Biol.">
        <title>Mammalian nonsarcomeric myosin regulatory light chains are encoded by two differentially regulated and linked genes.</title>
        <authorList>
            <person name="Grant J.W."/>
            <person name="Taubmann M.B."/>
            <person name="Church S.L."/>
            <person name="Johnson R.L."/>
            <person name="Nadal-Ginard B."/>
        </authorList>
    </citation>
    <scope>NUCLEOTIDE SEQUENCE [MRNA]</scope>
    <source>
        <strain>Sprague-Dawley</strain>
        <tissue>Brain</tissue>
        <tissue>Liver</tissue>
    </source>
</reference>
<reference key="2">
    <citation type="submission" date="1992-10" db="EMBL/GenBank/DDBJ databases">
        <authorList>
            <person name="Grant J.W."/>
        </authorList>
    </citation>
    <scope>SEQUENCE REVISION</scope>
</reference>
<reference key="3">
    <citation type="journal article" date="2004" name="Genome Res.">
        <title>The status, quality, and expansion of the NIH full-length cDNA project: the Mammalian Gene Collection (MGC).</title>
        <authorList>
            <consortium name="The MGC Project Team"/>
        </authorList>
    </citation>
    <scope>NUCLEOTIDE SEQUENCE [LARGE SCALE MRNA]</scope>
    <source>
        <tissue>Pituitary</tissue>
    </source>
</reference>
<reference key="4">
    <citation type="journal article" date="2001" name="J. Biol. Chem.">
        <title>Zipper-interacting protein kinase induces Ca(2+)-free smooth muscle contraction via myosin light chain phosphorylation.</title>
        <authorList>
            <person name="Niiro N."/>
            <person name="Ikebe M."/>
        </authorList>
    </citation>
    <scope>PHOSPHORYLATION AT THR-19 AND SER-20 BY ZIPK/DAPK3</scope>
</reference>
<reference key="5">
    <citation type="journal article" date="2008" name="Am. J. Physiol.">
        <title>Myosin phosphorylation triggers actin polymerization in vascular smooth muscle.</title>
        <authorList>
            <person name="Chen X."/>
            <person name="Pavlish K."/>
            <person name="Benoit J.N."/>
        </authorList>
    </citation>
    <scope>FUNCTION</scope>
</reference>
<accession>P18666</accession>
<accession>Q6P9V4</accession>
<protein>
    <recommendedName>
        <fullName>Myosin regulatory light chain 12B</fullName>
    </recommendedName>
    <alternativeName>
        <fullName>Myosin RLC-B</fullName>
    </alternativeName>
    <alternativeName>
        <fullName>Myosin regulatory light chain 2-B, smooth muscle isoform</fullName>
        <shortName>MLC-2</shortName>
    </alternativeName>
    <alternativeName>
        <fullName>Myosin regulatory light chain 20 kDa</fullName>
        <shortName>MLC20</shortName>
    </alternativeName>
    <alternativeName>
        <fullName>Myosin regulatory light chain MRLC2</fullName>
    </alternativeName>
</protein>
<organism>
    <name type="scientific">Rattus norvegicus</name>
    <name type="common">Rat</name>
    <dbReference type="NCBI Taxonomy" id="10116"/>
    <lineage>
        <taxon>Eukaryota</taxon>
        <taxon>Metazoa</taxon>
        <taxon>Chordata</taxon>
        <taxon>Craniata</taxon>
        <taxon>Vertebrata</taxon>
        <taxon>Euteleostomi</taxon>
        <taxon>Mammalia</taxon>
        <taxon>Eutheria</taxon>
        <taxon>Euarchontoglires</taxon>
        <taxon>Glires</taxon>
        <taxon>Rodentia</taxon>
        <taxon>Myomorpha</taxon>
        <taxon>Muroidea</taxon>
        <taxon>Muridae</taxon>
        <taxon>Murinae</taxon>
        <taxon>Rattus</taxon>
    </lineage>
</organism>
<comment type="function">
    <text evidence="6">Myosin regulatory subunit that plays an important role in regulation of both smooth muscle and nonmuscle cell contractile activity via its phosphorylation. Phosphorylation triggers actin polymerization in vascular smooth muscle. Implicated in cytokinesis, receptor capping, and cell locomotion.</text>
</comment>
<comment type="subunit">
    <text evidence="2">Myosin is a hexamer of 2 heavy chains and 4 light chains: interacts with myosin heavy chain MYO19.</text>
</comment>
<comment type="PTM">
    <text evidence="1">Phosphorylation increases the actin-activated myosin ATPase activity and thereby regulates the contractile activity. It is required to generate the driving force in the migration of the cells but not necessary for localization of myosin-2 at the leading edge. Phosphorylation is reduced following epigallocatechin-3-O-gallate treatment.</text>
</comment>
<comment type="miscellaneous">
    <text>This chain binds calcium.</text>
</comment>
<dbReference type="EMBL" id="X52840">
    <property type="protein sequence ID" value="CAA37024.1"/>
    <property type="molecule type" value="mRNA"/>
</dbReference>
<dbReference type="EMBL" id="BC060577">
    <property type="protein sequence ID" value="AAH60577.1"/>
    <property type="molecule type" value="mRNA"/>
</dbReference>
<dbReference type="PIR" id="B37100">
    <property type="entry name" value="B37100"/>
</dbReference>
<dbReference type="PIR" id="S11632">
    <property type="entry name" value="S11632"/>
</dbReference>
<dbReference type="RefSeq" id="NP_059039.2">
    <property type="nucleotide sequence ID" value="NM_017343.2"/>
</dbReference>
<dbReference type="SMR" id="P18666"/>
<dbReference type="BioGRID" id="248423">
    <property type="interactions" value="4"/>
</dbReference>
<dbReference type="CORUM" id="P18666"/>
<dbReference type="FunCoup" id="P18666">
    <property type="interactions" value="1949"/>
</dbReference>
<dbReference type="IntAct" id="P18666">
    <property type="interactions" value="3"/>
</dbReference>
<dbReference type="STRING" id="10116.ENSRNOP00000045992"/>
<dbReference type="iPTMnet" id="P18666"/>
<dbReference type="PhosphoSitePlus" id="P18666"/>
<dbReference type="jPOST" id="P18666"/>
<dbReference type="PaxDb" id="10116-ENSRNOP00000045992"/>
<dbReference type="GeneID" id="50685"/>
<dbReference type="KEGG" id="rno:50685"/>
<dbReference type="AGR" id="RGD:628855"/>
<dbReference type="CTD" id="103910"/>
<dbReference type="RGD" id="628855">
    <property type="gene designation" value="Myl12b"/>
</dbReference>
<dbReference type="eggNOG" id="KOG0031">
    <property type="taxonomic scope" value="Eukaryota"/>
</dbReference>
<dbReference type="InParanoid" id="P18666"/>
<dbReference type="OrthoDB" id="9571582at2759"/>
<dbReference type="PhylomeDB" id="P18666"/>
<dbReference type="TreeFam" id="TF314218"/>
<dbReference type="BRENDA" id="2.7.11.18">
    <property type="organism ID" value="5301"/>
</dbReference>
<dbReference type="Reactome" id="R-RNO-445355">
    <property type="pathway name" value="Smooth Muscle Contraction"/>
</dbReference>
<dbReference type="Reactome" id="R-RNO-5627123">
    <property type="pathway name" value="RHO GTPases activate PAKs"/>
</dbReference>
<dbReference type="PRO" id="PR:P18666"/>
<dbReference type="Proteomes" id="UP000002494">
    <property type="component" value="Unplaced"/>
</dbReference>
<dbReference type="GO" id="GO:0045177">
    <property type="term" value="C:apical part of cell"/>
    <property type="evidence" value="ECO:0000266"/>
    <property type="project" value="RGD"/>
</dbReference>
<dbReference type="GO" id="GO:0005903">
    <property type="term" value="C:brush border"/>
    <property type="evidence" value="ECO:0000266"/>
    <property type="project" value="RGD"/>
</dbReference>
<dbReference type="GO" id="GO:0005938">
    <property type="term" value="C:cell cortex"/>
    <property type="evidence" value="ECO:0000250"/>
    <property type="project" value="UniProtKB"/>
</dbReference>
<dbReference type="GO" id="GO:0005737">
    <property type="term" value="C:cytoplasm"/>
    <property type="evidence" value="ECO:0000318"/>
    <property type="project" value="GO_Central"/>
</dbReference>
<dbReference type="GO" id="GO:0030016">
    <property type="term" value="C:myofibril"/>
    <property type="evidence" value="ECO:0000318"/>
    <property type="project" value="GO_Central"/>
</dbReference>
<dbReference type="GO" id="GO:0016460">
    <property type="term" value="C:myosin II complex"/>
    <property type="evidence" value="ECO:0000266"/>
    <property type="project" value="RGD"/>
</dbReference>
<dbReference type="GO" id="GO:0032991">
    <property type="term" value="C:protein-containing complex"/>
    <property type="evidence" value="ECO:0000314"/>
    <property type="project" value="RGD"/>
</dbReference>
<dbReference type="GO" id="GO:0001725">
    <property type="term" value="C:stress fiber"/>
    <property type="evidence" value="ECO:0000266"/>
    <property type="project" value="RGD"/>
</dbReference>
<dbReference type="GO" id="GO:0030018">
    <property type="term" value="C:Z disc"/>
    <property type="evidence" value="ECO:0000266"/>
    <property type="project" value="RGD"/>
</dbReference>
<dbReference type="GO" id="GO:0005509">
    <property type="term" value="F:calcium ion binding"/>
    <property type="evidence" value="ECO:0007669"/>
    <property type="project" value="InterPro"/>
</dbReference>
<dbReference type="GO" id="GO:0051020">
    <property type="term" value="F:GTPase binding"/>
    <property type="evidence" value="ECO:0000266"/>
    <property type="project" value="RGD"/>
</dbReference>
<dbReference type="GO" id="GO:0032036">
    <property type="term" value="F:myosin heavy chain binding"/>
    <property type="evidence" value="ECO:0000266"/>
    <property type="project" value="RGD"/>
</dbReference>
<dbReference type="GO" id="GO:0008360">
    <property type="term" value="P:regulation of cell shape"/>
    <property type="evidence" value="ECO:0000266"/>
    <property type="project" value="RGD"/>
</dbReference>
<dbReference type="CDD" id="cd00051">
    <property type="entry name" value="EFh"/>
    <property type="match status" value="1"/>
</dbReference>
<dbReference type="FunFam" id="1.10.238.10:FF:000010">
    <property type="entry name" value="Myosin regulatory light chain 2, atrial isoform"/>
    <property type="match status" value="1"/>
</dbReference>
<dbReference type="FunFam" id="1.10.238.10:FF:000007">
    <property type="entry name" value="Putative myosin regulatory light chain sqh"/>
    <property type="match status" value="1"/>
</dbReference>
<dbReference type="Gene3D" id="1.10.238.10">
    <property type="entry name" value="EF-hand"/>
    <property type="match status" value="2"/>
</dbReference>
<dbReference type="InterPro" id="IPR011992">
    <property type="entry name" value="EF-hand-dom_pair"/>
</dbReference>
<dbReference type="InterPro" id="IPR018247">
    <property type="entry name" value="EF_Hand_1_Ca_BS"/>
</dbReference>
<dbReference type="InterPro" id="IPR015070">
    <property type="entry name" value="EF_hand_DJBP"/>
</dbReference>
<dbReference type="InterPro" id="IPR002048">
    <property type="entry name" value="EF_hand_dom"/>
</dbReference>
<dbReference type="InterPro" id="IPR050403">
    <property type="entry name" value="Myosin_RLC"/>
</dbReference>
<dbReference type="PANTHER" id="PTHR23049">
    <property type="entry name" value="MYOSIN REGULATORY LIGHT CHAIN 2"/>
    <property type="match status" value="1"/>
</dbReference>
<dbReference type="Pfam" id="PF08976">
    <property type="entry name" value="EF-hand_11"/>
    <property type="match status" value="1"/>
</dbReference>
<dbReference type="Pfam" id="PF13499">
    <property type="entry name" value="EF-hand_7"/>
    <property type="match status" value="1"/>
</dbReference>
<dbReference type="SMART" id="SM00054">
    <property type="entry name" value="EFh"/>
    <property type="match status" value="2"/>
</dbReference>
<dbReference type="SUPFAM" id="SSF47473">
    <property type="entry name" value="EF-hand"/>
    <property type="match status" value="1"/>
</dbReference>
<dbReference type="PROSITE" id="PS00018">
    <property type="entry name" value="EF_HAND_1"/>
    <property type="match status" value="1"/>
</dbReference>
<dbReference type="PROSITE" id="PS50222">
    <property type="entry name" value="EF_HAND_2"/>
    <property type="match status" value="3"/>
</dbReference>
<evidence type="ECO:0000250" key="1">
    <source>
        <dbReference type="UniProtKB" id="O14950"/>
    </source>
</evidence>
<evidence type="ECO:0000250" key="2">
    <source>
        <dbReference type="UniProtKB" id="Q3THE2"/>
    </source>
</evidence>
<evidence type="ECO:0000255" key="3">
    <source>
        <dbReference type="PROSITE-ProRule" id="PRU00448"/>
    </source>
</evidence>
<evidence type="ECO:0000256" key="4">
    <source>
        <dbReference type="SAM" id="MobiDB-lite"/>
    </source>
</evidence>
<evidence type="ECO:0000269" key="5">
    <source>
    </source>
</evidence>
<evidence type="ECO:0000269" key="6">
    <source>
    </source>
</evidence>
<evidence type="ECO:0000305" key="7"/>